<gene>
    <name type="primary">MT-CYB</name>
    <name type="synonym">COB</name>
    <name type="synonym">CYTB</name>
    <name type="synonym">MTCYB</name>
</gene>
<evidence type="ECO:0000250" key="1"/>
<evidence type="ECO:0000250" key="2">
    <source>
        <dbReference type="UniProtKB" id="P00157"/>
    </source>
</evidence>
<evidence type="ECO:0000255" key="3">
    <source>
        <dbReference type="PROSITE-ProRule" id="PRU00967"/>
    </source>
</evidence>
<evidence type="ECO:0000255" key="4">
    <source>
        <dbReference type="PROSITE-ProRule" id="PRU00968"/>
    </source>
</evidence>
<proteinExistence type="inferred from homology"/>
<dbReference type="EMBL" id="AY380768">
    <property type="protein sequence ID" value="AAR91781.1"/>
    <property type="molecule type" value="Genomic_DNA"/>
</dbReference>
<dbReference type="EMBL" id="AY380769">
    <property type="protein sequence ID" value="AAR91782.1"/>
    <property type="molecule type" value="Genomic_DNA"/>
</dbReference>
<dbReference type="SMR" id="Q597C7"/>
<dbReference type="GO" id="GO:0005743">
    <property type="term" value="C:mitochondrial inner membrane"/>
    <property type="evidence" value="ECO:0007669"/>
    <property type="project" value="UniProtKB-SubCell"/>
</dbReference>
<dbReference type="GO" id="GO:0045275">
    <property type="term" value="C:respiratory chain complex III"/>
    <property type="evidence" value="ECO:0007669"/>
    <property type="project" value="InterPro"/>
</dbReference>
<dbReference type="GO" id="GO:0046872">
    <property type="term" value="F:metal ion binding"/>
    <property type="evidence" value="ECO:0007669"/>
    <property type="project" value="UniProtKB-KW"/>
</dbReference>
<dbReference type="GO" id="GO:0008121">
    <property type="term" value="F:ubiquinol-cytochrome-c reductase activity"/>
    <property type="evidence" value="ECO:0007669"/>
    <property type="project" value="InterPro"/>
</dbReference>
<dbReference type="GO" id="GO:0006122">
    <property type="term" value="P:mitochondrial electron transport, ubiquinol to cytochrome c"/>
    <property type="evidence" value="ECO:0007669"/>
    <property type="project" value="TreeGrafter"/>
</dbReference>
<dbReference type="CDD" id="cd00290">
    <property type="entry name" value="cytochrome_b_C"/>
    <property type="match status" value="1"/>
</dbReference>
<dbReference type="CDD" id="cd00284">
    <property type="entry name" value="Cytochrome_b_N"/>
    <property type="match status" value="1"/>
</dbReference>
<dbReference type="FunFam" id="1.20.810.10:FF:000002">
    <property type="entry name" value="Cytochrome b"/>
    <property type="match status" value="1"/>
</dbReference>
<dbReference type="Gene3D" id="1.20.810.10">
    <property type="entry name" value="Cytochrome Bc1 Complex, Chain C"/>
    <property type="match status" value="1"/>
</dbReference>
<dbReference type="InterPro" id="IPR005798">
    <property type="entry name" value="Cyt_b/b6_C"/>
</dbReference>
<dbReference type="InterPro" id="IPR036150">
    <property type="entry name" value="Cyt_b/b6_C_sf"/>
</dbReference>
<dbReference type="InterPro" id="IPR005797">
    <property type="entry name" value="Cyt_b/b6_N"/>
</dbReference>
<dbReference type="InterPro" id="IPR027387">
    <property type="entry name" value="Cytb/b6-like_sf"/>
</dbReference>
<dbReference type="InterPro" id="IPR030689">
    <property type="entry name" value="Cytochrome_b"/>
</dbReference>
<dbReference type="InterPro" id="IPR048260">
    <property type="entry name" value="Cytochrome_b_C_euk/bac"/>
</dbReference>
<dbReference type="InterPro" id="IPR048259">
    <property type="entry name" value="Cytochrome_b_N_euk/bac"/>
</dbReference>
<dbReference type="InterPro" id="IPR016174">
    <property type="entry name" value="Di-haem_cyt_TM"/>
</dbReference>
<dbReference type="PANTHER" id="PTHR19271">
    <property type="entry name" value="CYTOCHROME B"/>
    <property type="match status" value="1"/>
</dbReference>
<dbReference type="PANTHER" id="PTHR19271:SF16">
    <property type="entry name" value="CYTOCHROME B"/>
    <property type="match status" value="1"/>
</dbReference>
<dbReference type="Pfam" id="PF00032">
    <property type="entry name" value="Cytochrom_B_C"/>
    <property type="match status" value="1"/>
</dbReference>
<dbReference type="Pfam" id="PF00033">
    <property type="entry name" value="Cytochrome_B"/>
    <property type="match status" value="1"/>
</dbReference>
<dbReference type="PIRSF" id="PIRSF038885">
    <property type="entry name" value="COB"/>
    <property type="match status" value="1"/>
</dbReference>
<dbReference type="SUPFAM" id="SSF81648">
    <property type="entry name" value="a domain/subunit of cytochrome bc1 complex (Ubiquinol-cytochrome c reductase)"/>
    <property type="match status" value="1"/>
</dbReference>
<dbReference type="SUPFAM" id="SSF81342">
    <property type="entry name" value="Transmembrane di-heme cytochromes"/>
    <property type="match status" value="1"/>
</dbReference>
<dbReference type="PROSITE" id="PS51003">
    <property type="entry name" value="CYTB_CTER"/>
    <property type="match status" value="1"/>
</dbReference>
<dbReference type="PROSITE" id="PS51002">
    <property type="entry name" value="CYTB_NTER"/>
    <property type="match status" value="1"/>
</dbReference>
<feature type="chain" id="PRO_0000257917" description="Cytochrome b">
    <location>
        <begin position="1"/>
        <end position="379"/>
    </location>
</feature>
<feature type="transmembrane region" description="Helical" evidence="2">
    <location>
        <begin position="33"/>
        <end position="53"/>
    </location>
</feature>
<feature type="transmembrane region" description="Helical" evidence="2">
    <location>
        <begin position="77"/>
        <end position="98"/>
    </location>
</feature>
<feature type="transmembrane region" description="Helical" evidence="2">
    <location>
        <begin position="113"/>
        <end position="133"/>
    </location>
</feature>
<feature type="transmembrane region" description="Helical" evidence="2">
    <location>
        <begin position="178"/>
        <end position="198"/>
    </location>
</feature>
<feature type="transmembrane region" description="Helical" evidence="2">
    <location>
        <begin position="226"/>
        <end position="246"/>
    </location>
</feature>
<feature type="transmembrane region" description="Helical" evidence="2">
    <location>
        <begin position="288"/>
        <end position="308"/>
    </location>
</feature>
<feature type="transmembrane region" description="Helical" evidence="2">
    <location>
        <begin position="320"/>
        <end position="340"/>
    </location>
</feature>
<feature type="transmembrane region" description="Helical" evidence="2">
    <location>
        <begin position="347"/>
        <end position="367"/>
    </location>
</feature>
<feature type="binding site" description="axial binding residue" evidence="2">
    <location>
        <position position="83"/>
    </location>
    <ligand>
        <name>heme b</name>
        <dbReference type="ChEBI" id="CHEBI:60344"/>
        <label>b562</label>
    </ligand>
    <ligandPart>
        <name>Fe</name>
        <dbReference type="ChEBI" id="CHEBI:18248"/>
    </ligandPart>
</feature>
<feature type="binding site" description="axial binding residue" evidence="2">
    <location>
        <position position="97"/>
    </location>
    <ligand>
        <name>heme b</name>
        <dbReference type="ChEBI" id="CHEBI:60344"/>
        <label>b566</label>
    </ligand>
    <ligandPart>
        <name>Fe</name>
        <dbReference type="ChEBI" id="CHEBI:18248"/>
    </ligandPart>
</feature>
<feature type="binding site" description="axial binding residue" evidence="2">
    <location>
        <position position="182"/>
    </location>
    <ligand>
        <name>heme b</name>
        <dbReference type="ChEBI" id="CHEBI:60344"/>
        <label>b562</label>
    </ligand>
    <ligandPart>
        <name>Fe</name>
        <dbReference type="ChEBI" id="CHEBI:18248"/>
    </ligandPart>
</feature>
<feature type="binding site" description="axial binding residue" evidence="2">
    <location>
        <position position="196"/>
    </location>
    <ligand>
        <name>heme b</name>
        <dbReference type="ChEBI" id="CHEBI:60344"/>
        <label>b566</label>
    </ligand>
    <ligandPart>
        <name>Fe</name>
        <dbReference type="ChEBI" id="CHEBI:18248"/>
    </ligandPart>
</feature>
<feature type="binding site" evidence="2">
    <location>
        <position position="201"/>
    </location>
    <ligand>
        <name>a ubiquinone</name>
        <dbReference type="ChEBI" id="CHEBI:16389"/>
    </ligand>
</feature>
<organism>
    <name type="scientific">Micronycteris hirsuta</name>
    <name type="common">Hairy big-eared bat</name>
    <dbReference type="NCBI Taxonomy" id="148065"/>
    <lineage>
        <taxon>Eukaryota</taxon>
        <taxon>Metazoa</taxon>
        <taxon>Chordata</taxon>
        <taxon>Craniata</taxon>
        <taxon>Vertebrata</taxon>
        <taxon>Euteleostomi</taxon>
        <taxon>Mammalia</taxon>
        <taxon>Eutheria</taxon>
        <taxon>Laurasiatheria</taxon>
        <taxon>Chiroptera</taxon>
        <taxon>Yangochiroptera</taxon>
        <taxon>Phyllostomidae</taxon>
        <taxon>Phyllostominae</taxon>
        <taxon>Micronycteris</taxon>
    </lineage>
</organism>
<keyword id="KW-0249">Electron transport</keyword>
<keyword id="KW-0349">Heme</keyword>
<keyword id="KW-0408">Iron</keyword>
<keyword id="KW-0472">Membrane</keyword>
<keyword id="KW-0479">Metal-binding</keyword>
<keyword id="KW-0496">Mitochondrion</keyword>
<keyword id="KW-0999">Mitochondrion inner membrane</keyword>
<keyword id="KW-0679">Respiratory chain</keyword>
<keyword id="KW-0812">Transmembrane</keyword>
<keyword id="KW-1133">Transmembrane helix</keyword>
<keyword id="KW-0813">Transport</keyword>
<keyword id="KW-0830">Ubiquinone</keyword>
<comment type="function">
    <text evidence="2">Component of the ubiquinol-cytochrome c reductase complex (complex III or cytochrome b-c1 complex) that is part of the mitochondrial respiratory chain. The b-c1 complex mediates electron transfer from ubiquinol to cytochrome c. Contributes to the generation of a proton gradient across the mitochondrial membrane that is then used for ATP synthesis.</text>
</comment>
<comment type="cofactor">
    <cofactor evidence="2">
        <name>heme b</name>
        <dbReference type="ChEBI" id="CHEBI:60344"/>
    </cofactor>
    <text evidence="2">Binds 2 heme b groups non-covalently.</text>
</comment>
<comment type="subunit">
    <text evidence="2">The cytochrome bc1 complex contains 11 subunits: 3 respiratory subunits (MT-CYB, CYC1 and UQCRFS1), 2 core proteins (UQCRC1 and UQCRC2) and 6 low-molecular weight proteins (UQCRH/QCR6, UQCRB/QCR7, UQCRQ/QCR8, UQCR10/QCR9, UQCR11/QCR10 and a cleavage product of UQCRFS1). This cytochrome bc1 complex then forms a dimer.</text>
</comment>
<comment type="subcellular location">
    <subcellularLocation>
        <location evidence="2">Mitochondrion inner membrane</location>
        <topology evidence="2">Multi-pass membrane protein</topology>
    </subcellularLocation>
</comment>
<comment type="miscellaneous">
    <text evidence="1">Heme 1 (or BL or b562) is low-potential and absorbs at about 562 nm, and heme 2 (or BH or b566) is high-potential and absorbs at about 566 nm.</text>
</comment>
<comment type="similarity">
    <text evidence="3 4">Belongs to the cytochrome b family.</text>
</comment>
<comment type="caution">
    <text evidence="2">The full-length protein contains only eight transmembrane helices, not nine as predicted by bioinformatics tools.</text>
</comment>
<reference key="1">
    <citation type="submission" date="2003-09" db="EMBL/GenBank/DDBJ databases">
        <title>Molecular evidence for unrecognized biodiversity in the bat genus Micronycteris (Phyllostomidae), with descriptions of two new subgenera.</title>
        <authorList>
            <person name="Porter C.A."/>
            <person name="Hoofer S.R."/>
            <person name="Cline C.A."/>
            <person name="Hoffmann F.G."/>
            <person name="Baker R.J."/>
        </authorList>
    </citation>
    <scope>NUCLEOTIDE SEQUENCE [GENOMIC DNA]</scope>
</reference>
<name>CYB_MICHI</name>
<accession>Q597C7</accession>
<sequence>MTNIRKTHPLLKILNSSLVDLPAPSSLTSWWNFGSLLGICLAVQILTGLFLAMHYTSDTATAFNSVTHICRDVNYGWVLRYLHANGASMFFICLYLHVGRGLYYGSYTYTETWNIGILLLFAVMATAFMGYVLPWGQMSFWGATVITNLLSAIPYIGTDLVQWIWGGFSVDKATLTRFFAFHFLLPFIIAALVMVHLLFLHETGSNNPTGIPSDLDMIPFHPYYTIKDILGLLIMLTALSTLVLFSPDLLGDPDNYTPANPLNTPPHIKPEWYFLFAYAILRSIPNKLGGVLALVLSILILAIVPMLHTSKQQSMIFRPLSQCLFWLLVADLLTLTWIGGQPVEYPYVIIGQAASILYFSIILIFMPLISSVENHLLKW</sequence>
<protein>
    <recommendedName>
        <fullName>Cytochrome b</fullName>
    </recommendedName>
    <alternativeName>
        <fullName>Complex III subunit 3</fullName>
    </alternativeName>
    <alternativeName>
        <fullName>Complex III subunit III</fullName>
    </alternativeName>
    <alternativeName>
        <fullName>Cytochrome b-c1 complex subunit 3</fullName>
    </alternativeName>
    <alternativeName>
        <fullName>Ubiquinol-cytochrome-c reductase complex cytochrome b subunit</fullName>
    </alternativeName>
</protein>
<geneLocation type="mitochondrion"/>